<dbReference type="EC" id="2.7.7.6" evidence="1"/>
<dbReference type="EMBL" id="CP000910">
    <property type="protein sequence ID" value="ABY23917.1"/>
    <property type="molecule type" value="Genomic_DNA"/>
</dbReference>
<dbReference type="RefSeq" id="WP_012245583.1">
    <property type="nucleotide sequence ID" value="NC_010168.1"/>
</dbReference>
<dbReference type="SMR" id="A9WSX9"/>
<dbReference type="STRING" id="288705.RSal33209_2185"/>
<dbReference type="KEGG" id="rsa:RSal33209_2185"/>
<dbReference type="eggNOG" id="COG0086">
    <property type="taxonomic scope" value="Bacteria"/>
</dbReference>
<dbReference type="HOGENOM" id="CLU_000524_3_1_11"/>
<dbReference type="Proteomes" id="UP000002007">
    <property type="component" value="Chromosome"/>
</dbReference>
<dbReference type="GO" id="GO:0000428">
    <property type="term" value="C:DNA-directed RNA polymerase complex"/>
    <property type="evidence" value="ECO:0007669"/>
    <property type="project" value="UniProtKB-KW"/>
</dbReference>
<dbReference type="GO" id="GO:0003677">
    <property type="term" value="F:DNA binding"/>
    <property type="evidence" value="ECO:0007669"/>
    <property type="project" value="UniProtKB-UniRule"/>
</dbReference>
<dbReference type="GO" id="GO:0003899">
    <property type="term" value="F:DNA-directed RNA polymerase activity"/>
    <property type="evidence" value="ECO:0007669"/>
    <property type="project" value="UniProtKB-UniRule"/>
</dbReference>
<dbReference type="GO" id="GO:0000287">
    <property type="term" value="F:magnesium ion binding"/>
    <property type="evidence" value="ECO:0007669"/>
    <property type="project" value="UniProtKB-UniRule"/>
</dbReference>
<dbReference type="GO" id="GO:0008270">
    <property type="term" value="F:zinc ion binding"/>
    <property type="evidence" value="ECO:0007669"/>
    <property type="project" value="UniProtKB-UniRule"/>
</dbReference>
<dbReference type="GO" id="GO:0006351">
    <property type="term" value="P:DNA-templated transcription"/>
    <property type="evidence" value="ECO:0007669"/>
    <property type="project" value="UniProtKB-UniRule"/>
</dbReference>
<dbReference type="CDD" id="cd02655">
    <property type="entry name" value="RNAP_beta'_C"/>
    <property type="match status" value="1"/>
</dbReference>
<dbReference type="CDD" id="cd01609">
    <property type="entry name" value="RNAP_beta'_N"/>
    <property type="match status" value="1"/>
</dbReference>
<dbReference type="FunFam" id="1.10.150.390:FF:000002">
    <property type="entry name" value="DNA-directed RNA polymerase subunit beta"/>
    <property type="match status" value="1"/>
</dbReference>
<dbReference type="FunFam" id="1.10.40.90:FF:000001">
    <property type="entry name" value="DNA-directed RNA polymerase subunit beta"/>
    <property type="match status" value="1"/>
</dbReference>
<dbReference type="FunFam" id="4.10.860.120:FF:000001">
    <property type="entry name" value="DNA-directed RNA polymerase subunit beta"/>
    <property type="match status" value="1"/>
</dbReference>
<dbReference type="Gene3D" id="1.10.132.30">
    <property type="match status" value="1"/>
</dbReference>
<dbReference type="Gene3D" id="1.10.150.390">
    <property type="match status" value="1"/>
</dbReference>
<dbReference type="Gene3D" id="1.10.1790.20">
    <property type="match status" value="1"/>
</dbReference>
<dbReference type="Gene3D" id="1.10.40.90">
    <property type="match status" value="1"/>
</dbReference>
<dbReference type="Gene3D" id="2.40.40.20">
    <property type="match status" value="1"/>
</dbReference>
<dbReference type="Gene3D" id="2.40.50.100">
    <property type="match status" value="1"/>
</dbReference>
<dbReference type="Gene3D" id="4.10.860.120">
    <property type="entry name" value="RNA polymerase II, clamp domain"/>
    <property type="match status" value="1"/>
</dbReference>
<dbReference type="Gene3D" id="1.10.274.100">
    <property type="entry name" value="RNA polymerase Rpb1, domain 3"/>
    <property type="match status" value="1"/>
</dbReference>
<dbReference type="HAMAP" id="MF_01322">
    <property type="entry name" value="RNApol_bact_RpoC"/>
    <property type="match status" value="1"/>
</dbReference>
<dbReference type="InterPro" id="IPR045867">
    <property type="entry name" value="DNA-dir_RpoC_beta_prime"/>
</dbReference>
<dbReference type="InterPro" id="IPR012754">
    <property type="entry name" value="DNA-dir_RpoC_beta_prime_bact"/>
</dbReference>
<dbReference type="InterPro" id="IPR000722">
    <property type="entry name" value="RNA_pol_asu"/>
</dbReference>
<dbReference type="InterPro" id="IPR006592">
    <property type="entry name" value="RNA_pol_N"/>
</dbReference>
<dbReference type="InterPro" id="IPR007080">
    <property type="entry name" value="RNA_pol_Rpb1_1"/>
</dbReference>
<dbReference type="InterPro" id="IPR007066">
    <property type="entry name" value="RNA_pol_Rpb1_3"/>
</dbReference>
<dbReference type="InterPro" id="IPR042102">
    <property type="entry name" value="RNA_pol_Rpb1_3_sf"/>
</dbReference>
<dbReference type="InterPro" id="IPR007083">
    <property type="entry name" value="RNA_pol_Rpb1_4"/>
</dbReference>
<dbReference type="InterPro" id="IPR007081">
    <property type="entry name" value="RNA_pol_Rpb1_5"/>
</dbReference>
<dbReference type="InterPro" id="IPR044893">
    <property type="entry name" value="RNA_pol_Rpb1_clamp_domain"/>
</dbReference>
<dbReference type="InterPro" id="IPR038120">
    <property type="entry name" value="Rpb1_funnel_sf"/>
</dbReference>
<dbReference type="NCBIfam" id="NF011498">
    <property type="entry name" value="PRK14906.1"/>
    <property type="match status" value="1"/>
</dbReference>
<dbReference type="NCBIfam" id="TIGR02386">
    <property type="entry name" value="rpoC_TIGR"/>
    <property type="match status" value="1"/>
</dbReference>
<dbReference type="PANTHER" id="PTHR19376">
    <property type="entry name" value="DNA-DIRECTED RNA POLYMERASE"/>
    <property type="match status" value="1"/>
</dbReference>
<dbReference type="PANTHER" id="PTHR19376:SF54">
    <property type="entry name" value="DNA-DIRECTED RNA POLYMERASE SUBUNIT BETA"/>
    <property type="match status" value="1"/>
</dbReference>
<dbReference type="Pfam" id="PF04997">
    <property type="entry name" value="RNA_pol_Rpb1_1"/>
    <property type="match status" value="1"/>
</dbReference>
<dbReference type="Pfam" id="PF00623">
    <property type="entry name" value="RNA_pol_Rpb1_2"/>
    <property type="match status" value="1"/>
</dbReference>
<dbReference type="Pfam" id="PF04983">
    <property type="entry name" value="RNA_pol_Rpb1_3"/>
    <property type="match status" value="1"/>
</dbReference>
<dbReference type="Pfam" id="PF05000">
    <property type="entry name" value="RNA_pol_Rpb1_4"/>
    <property type="match status" value="1"/>
</dbReference>
<dbReference type="Pfam" id="PF04998">
    <property type="entry name" value="RNA_pol_Rpb1_5"/>
    <property type="match status" value="1"/>
</dbReference>
<dbReference type="SMART" id="SM00663">
    <property type="entry name" value="RPOLA_N"/>
    <property type="match status" value="1"/>
</dbReference>
<dbReference type="SUPFAM" id="SSF64484">
    <property type="entry name" value="beta and beta-prime subunits of DNA dependent RNA-polymerase"/>
    <property type="match status" value="1"/>
</dbReference>
<sequence>MSSEATFGSMQIGLATASDIRDWSFGEVKKPETINYRTLKPEKDGLFCEKIFGPSRDWECYCGKYKRVRFKGIICERCGVEVTRAKVRRERMGHIELAAPVTHIWYFKGVPSRLGYLLDLAPKDLEKVIYFAAYMITSVDDEMRHADLPNLQAEHDLEKKQLVDTRDSDIAGIARDLEGELTKLEGEGAKAADKKKARDSADRQMANIRKRADADIDRLDQVWDRFKGLKVTDLEGDEGLYRELRDRYGLYFEGSMGAEAIKKRLENFDMAAESESLRDTIQNGKGQRKTRALKRLKVVNAFLTTKNSPLGMVLDAVPVIPPELRPMVQLDGGRFATSDLNDLYRRVINRNNRLKRLLDLGAPEIIVNNEKRMLQEAVDSLFDNGRRGRPVTGPGNRPLKSLSDMLKGKQGRFRQNLLGKRVDYSGRSVIVVGPQLKLHQCGLPKQMALELFKPFVMKRLVDLNHAQNIKSAKRMVERYRPQVWDVLEEIITEHPVLLNRAPTLHRLGIQAFEPMLVEGKAIQLHPLVCGAFNADFDGDQMAVHLPLSPEAQAEARVLMLSSNNILKPSDGRPVTLPSQDMIIGLYHLTTKRVGSAGEGRIFTSPSEAIMAHDAGVLHLNSTVKIRLDNFVPGEDWEAPAGWEAGQPAIVETSLGQVLFNDTLPADYPWVEKVADKGQLSEIVNDLAERYPKVVVAATLDNLKDAGFYWATRSGVTVAISDIEVPAEKPAILAGYEVKAAKVQSQFEKGLIADDERRQELIDIWNQATNDVADAMRKSLSASNTINRMVSSGARGNWMQVRQIAGIRGLVANPKGEIIPRPIKSSYREGLSVLEYFIATHGARKGLADTALRTANSGYLTRRLVDVSQDVIVREDDCGTEYGLTLPIAVADSNGELVMHEEVENSVYARTLATEVTDAKGKVLAAAGADVGDVLIAELFAAGVTEVKVRSVLTCESAVGTCAQCYGRSLATGKLVDIGEAVGIIAAQSIGEPGTQLTMRTFHTGGAVSASRGEDITQGLPRIQELFEARTPKGVAPIAEAAGRVNIEETERQMRLVLTPDDGTEEIAYPILRRARLLVADGDRVEVGQKLVVGAVDPKQVLRVLGPRAAQKHLVEEVQRVYRSQGVGIHDKHVEVIVRQMLRRVTVIESGDSNLLPGELAERGRFETENRRVVSEGQKPASGRNELMGITKASLATESWLSAASFQETTRVLTQAAMEGKSDPLLGLKENVIIGKLIPAGTGLPRYTDITVEPTEEAKANLFTAPSAFSDFDYAGVGGDLAPEFQAIPLDDYDLGSEYR</sequence>
<accession>A9WSX9</accession>
<gene>
    <name evidence="1" type="primary">rpoC</name>
    <name type="ordered locus">RSal33209_2185</name>
</gene>
<proteinExistence type="inferred from homology"/>
<name>RPOC_RENSM</name>
<reference key="1">
    <citation type="journal article" date="2008" name="J. Bacteriol.">
        <title>Genome sequence of the fish pathogen Renibacterium salmoninarum suggests reductive evolution away from an environmental Arthrobacter ancestor.</title>
        <authorList>
            <person name="Wiens G.D."/>
            <person name="Rockey D.D."/>
            <person name="Wu Z."/>
            <person name="Chang J."/>
            <person name="Levy R."/>
            <person name="Crane S."/>
            <person name="Chen D.S."/>
            <person name="Capri G.R."/>
            <person name="Burnett J.R."/>
            <person name="Sudheesh P.S."/>
            <person name="Schipma M.J."/>
            <person name="Burd H."/>
            <person name="Bhattacharyya A."/>
            <person name="Rhodes L.D."/>
            <person name="Kaul R."/>
            <person name="Strom M.S."/>
        </authorList>
    </citation>
    <scope>NUCLEOTIDE SEQUENCE [LARGE SCALE GENOMIC DNA]</scope>
    <source>
        <strain>ATCC 33209 / DSM 20767 / JCM 11484 / NBRC 15589 / NCIMB 2235</strain>
    </source>
</reference>
<comment type="function">
    <text evidence="1">DNA-dependent RNA polymerase catalyzes the transcription of DNA into RNA using the four ribonucleoside triphosphates as substrates.</text>
</comment>
<comment type="catalytic activity">
    <reaction evidence="1">
        <text>RNA(n) + a ribonucleoside 5'-triphosphate = RNA(n+1) + diphosphate</text>
        <dbReference type="Rhea" id="RHEA:21248"/>
        <dbReference type="Rhea" id="RHEA-COMP:14527"/>
        <dbReference type="Rhea" id="RHEA-COMP:17342"/>
        <dbReference type="ChEBI" id="CHEBI:33019"/>
        <dbReference type="ChEBI" id="CHEBI:61557"/>
        <dbReference type="ChEBI" id="CHEBI:140395"/>
        <dbReference type="EC" id="2.7.7.6"/>
    </reaction>
</comment>
<comment type="cofactor">
    <cofactor evidence="1">
        <name>Mg(2+)</name>
        <dbReference type="ChEBI" id="CHEBI:18420"/>
    </cofactor>
    <text evidence="1">Binds 1 Mg(2+) ion per subunit.</text>
</comment>
<comment type="cofactor">
    <cofactor evidence="1">
        <name>Zn(2+)</name>
        <dbReference type="ChEBI" id="CHEBI:29105"/>
    </cofactor>
    <text evidence="1">Binds 2 Zn(2+) ions per subunit.</text>
</comment>
<comment type="subunit">
    <text evidence="1">The RNAP catalytic core consists of 2 alpha, 1 beta, 1 beta' and 1 omega subunit. When a sigma factor is associated with the core the holoenzyme is formed, which can initiate transcription.</text>
</comment>
<comment type="similarity">
    <text evidence="1">Belongs to the RNA polymerase beta' chain family.</text>
</comment>
<protein>
    <recommendedName>
        <fullName evidence="1">DNA-directed RNA polymerase subunit beta'</fullName>
        <shortName evidence="1">RNAP subunit beta'</shortName>
        <ecNumber evidence="1">2.7.7.6</ecNumber>
    </recommendedName>
    <alternativeName>
        <fullName evidence="1">RNA polymerase subunit beta'</fullName>
    </alternativeName>
    <alternativeName>
        <fullName evidence="1">Transcriptase subunit beta'</fullName>
    </alternativeName>
</protein>
<organism>
    <name type="scientific">Renibacterium salmoninarum (strain ATCC 33209 / DSM 20767 / JCM 11484 / NBRC 15589 / NCIMB 2235)</name>
    <dbReference type="NCBI Taxonomy" id="288705"/>
    <lineage>
        <taxon>Bacteria</taxon>
        <taxon>Bacillati</taxon>
        <taxon>Actinomycetota</taxon>
        <taxon>Actinomycetes</taxon>
        <taxon>Micrococcales</taxon>
        <taxon>Micrococcaceae</taxon>
        <taxon>Renibacterium</taxon>
    </lineage>
</organism>
<evidence type="ECO:0000255" key="1">
    <source>
        <dbReference type="HAMAP-Rule" id="MF_01322"/>
    </source>
</evidence>
<feature type="chain" id="PRO_1000086407" description="DNA-directed RNA polymerase subunit beta'">
    <location>
        <begin position="1"/>
        <end position="1299"/>
    </location>
</feature>
<feature type="binding site" evidence="1">
    <location>
        <position position="60"/>
    </location>
    <ligand>
        <name>Zn(2+)</name>
        <dbReference type="ChEBI" id="CHEBI:29105"/>
        <label>1</label>
    </ligand>
</feature>
<feature type="binding site" evidence="1">
    <location>
        <position position="62"/>
    </location>
    <ligand>
        <name>Zn(2+)</name>
        <dbReference type="ChEBI" id="CHEBI:29105"/>
        <label>1</label>
    </ligand>
</feature>
<feature type="binding site" evidence="1">
    <location>
        <position position="75"/>
    </location>
    <ligand>
        <name>Zn(2+)</name>
        <dbReference type="ChEBI" id="CHEBI:29105"/>
        <label>1</label>
    </ligand>
</feature>
<feature type="binding site" evidence="1">
    <location>
        <position position="78"/>
    </location>
    <ligand>
        <name>Zn(2+)</name>
        <dbReference type="ChEBI" id="CHEBI:29105"/>
        <label>1</label>
    </ligand>
</feature>
<feature type="binding site" evidence="1">
    <location>
        <position position="535"/>
    </location>
    <ligand>
        <name>Mg(2+)</name>
        <dbReference type="ChEBI" id="CHEBI:18420"/>
    </ligand>
</feature>
<feature type="binding site" evidence="1">
    <location>
        <position position="537"/>
    </location>
    <ligand>
        <name>Mg(2+)</name>
        <dbReference type="ChEBI" id="CHEBI:18420"/>
    </ligand>
</feature>
<feature type="binding site" evidence="1">
    <location>
        <position position="539"/>
    </location>
    <ligand>
        <name>Mg(2+)</name>
        <dbReference type="ChEBI" id="CHEBI:18420"/>
    </ligand>
</feature>
<feature type="binding site" evidence="1">
    <location>
        <position position="877"/>
    </location>
    <ligand>
        <name>Zn(2+)</name>
        <dbReference type="ChEBI" id="CHEBI:29105"/>
        <label>2</label>
    </ligand>
</feature>
<feature type="binding site" evidence="1">
    <location>
        <position position="954"/>
    </location>
    <ligand>
        <name>Zn(2+)</name>
        <dbReference type="ChEBI" id="CHEBI:29105"/>
        <label>2</label>
    </ligand>
</feature>
<feature type="binding site" evidence="1">
    <location>
        <position position="961"/>
    </location>
    <ligand>
        <name>Zn(2+)</name>
        <dbReference type="ChEBI" id="CHEBI:29105"/>
        <label>2</label>
    </ligand>
</feature>
<feature type="binding site" evidence="1">
    <location>
        <position position="964"/>
    </location>
    <ligand>
        <name>Zn(2+)</name>
        <dbReference type="ChEBI" id="CHEBI:29105"/>
        <label>2</label>
    </ligand>
</feature>
<keyword id="KW-0240">DNA-directed RNA polymerase</keyword>
<keyword id="KW-0460">Magnesium</keyword>
<keyword id="KW-0479">Metal-binding</keyword>
<keyword id="KW-0548">Nucleotidyltransferase</keyword>
<keyword id="KW-1185">Reference proteome</keyword>
<keyword id="KW-0804">Transcription</keyword>
<keyword id="KW-0808">Transferase</keyword>
<keyword id="KW-0862">Zinc</keyword>